<feature type="chain" id="PRO_0000215629" description="Dolichyldiphosphatase">
    <location>
        <begin position="1"/>
        <end position="239"/>
    </location>
</feature>
<feature type="topological domain" description="Lumenal" evidence="1">
    <location>
        <begin position="1"/>
        <end position="34"/>
    </location>
</feature>
<feature type="transmembrane region" description="Helical" evidence="1">
    <location>
        <begin position="35"/>
        <end position="55"/>
    </location>
</feature>
<feature type="topological domain" description="Cytoplasmic" evidence="1">
    <location>
        <begin position="56"/>
        <end position="131"/>
    </location>
</feature>
<feature type="transmembrane region" description="Helical" evidence="1">
    <location>
        <begin position="132"/>
        <end position="152"/>
    </location>
</feature>
<feature type="topological domain" description="Lumenal" evidence="1">
    <location>
        <begin position="153"/>
        <end position="164"/>
    </location>
</feature>
<feature type="transmembrane region" description="Helical" evidence="1">
    <location>
        <begin position="165"/>
        <end position="185"/>
    </location>
</feature>
<feature type="topological domain" description="Cytoplasmic" evidence="1">
    <location>
        <begin position="186"/>
        <end position="239"/>
    </location>
</feature>
<comment type="function">
    <text evidence="2 3">Non-essential protein which is required for efficient N-glycosylation. Necessary for maintaining optimal levels of dolichol-linked oligosaccharides. Hydrolyzes dolichyl pyrophosphate at a very high rate and dolichyl monophosphate at a much lower rate. Does not act on phosphatidate.</text>
</comment>
<comment type="catalytic activity">
    <reaction evidence="3">
        <text>a di-trans,poly-cis-dolichyl diphosphate + H2O = a di-trans,poly-cis-dolichyl phosphate + phosphate + H(+)</text>
        <dbReference type="Rhea" id="RHEA:14385"/>
        <dbReference type="Rhea" id="RHEA-COMP:19498"/>
        <dbReference type="Rhea" id="RHEA-COMP:19506"/>
        <dbReference type="ChEBI" id="CHEBI:15377"/>
        <dbReference type="ChEBI" id="CHEBI:15378"/>
        <dbReference type="ChEBI" id="CHEBI:43474"/>
        <dbReference type="ChEBI" id="CHEBI:57497"/>
        <dbReference type="ChEBI" id="CHEBI:57683"/>
        <dbReference type="EC" id="3.6.1.43"/>
    </reaction>
</comment>
<comment type="biophysicochemical properties">
    <kinetics>
        <KM evidence="3">48 uM for dolichyl diphosphate</KM>
        <KM evidence="3">40 uM for dolichyl phosphate</KM>
    </kinetics>
    <phDependence>
        <text evidence="3">Optimum pH is 6-7.</text>
    </phDependence>
</comment>
<comment type="pathway">
    <text>Protein modification; protein glycosylation.</text>
</comment>
<comment type="subcellular location">
    <subcellularLocation>
        <location evidence="3">Endoplasmic reticulum membrane</location>
        <topology evidence="3">Multi-pass membrane protein</topology>
    </subcellularLocation>
</comment>
<comment type="disruption phenotype">
    <text evidence="3">Causes an elevation in dolichyl diphosphate levels.</text>
</comment>
<comment type="similarity">
    <text evidence="5">Belongs to the dolichyldiphosphatase family.</text>
</comment>
<name>CAX4_YEAST</name>
<reference key="1">
    <citation type="journal article" date="2005" name="Nat. Genet.">
        <title>Quantitative trait loci mapped to single-nucleotide resolution in yeast.</title>
        <authorList>
            <person name="Deutschbauer A.M."/>
            <person name="Davis R.W."/>
        </authorList>
    </citation>
    <scope>NUCLEOTIDE SEQUENCE [GENOMIC DNA]</scope>
    <source>
        <strain>SK1</strain>
    </source>
</reference>
<reference key="2">
    <citation type="journal article" date="1997" name="Yeast">
        <title>Sequence analysis of 203 kilobases from Saccharomyces cerevisiae chromosome VII.</title>
        <authorList>
            <person name="Rieger M."/>
            <person name="Brueckner M."/>
            <person name="Schaefer M."/>
            <person name="Mueller-Auer S."/>
        </authorList>
    </citation>
    <scope>NUCLEOTIDE SEQUENCE [GENOMIC DNA]</scope>
    <source>
        <strain>ATCC 204508 / S288c</strain>
    </source>
</reference>
<reference key="3">
    <citation type="journal article" date="1997" name="Nature">
        <title>The nucleotide sequence of Saccharomyces cerevisiae chromosome VII.</title>
        <authorList>
            <person name="Tettelin H."/>
            <person name="Agostoni-Carbone M.L."/>
            <person name="Albermann K."/>
            <person name="Albers M."/>
            <person name="Arroyo J."/>
            <person name="Backes U."/>
            <person name="Barreiros T."/>
            <person name="Bertani I."/>
            <person name="Bjourson A.J."/>
            <person name="Brueckner M."/>
            <person name="Bruschi C.V."/>
            <person name="Carignani G."/>
            <person name="Castagnoli L."/>
            <person name="Cerdan E."/>
            <person name="Clemente M.L."/>
            <person name="Coblenz A."/>
            <person name="Coglievina M."/>
            <person name="Coissac E."/>
            <person name="Defoor E."/>
            <person name="Del Bino S."/>
            <person name="Delius H."/>
            <person name="Delneri D."/>
            <person name="de Wergifosse P."/>
            <person name="Dujon B."/>
            <person name="Durand P."/>
            <person name="Entian K.-D."/>
            <person name="Eraso P."/>
            <person name="Escribano V."/>
            <person name="Fabiani L."/>
            <person name="Fartmann B."/>
            <person name="Feroli F."/>
            <person name="Feuermann M."/>
            <person name="Frontali L."/>
            <person name="Garcia-Gonzalez M."/>
            <person name="Garcia-Saez M.I."/>
            <person name="Goffeau A."/>
            <person name="Guerreiro P."/>
            <person name="Hani J."/>
            <person name="Hansen M."/>
            <person name="Hebling U."/>
            <person name="Hernandez K."/>
            <person name="Heumann K."/>
            <person name="Hilger F."/>
            <person name="Hofmann B."/>
            <person name="Indge K.J."/>
            <person name="James C.M."/>
            <person name="Klima R."/>
            <person name="Koetter P."/>
            <person name="Kramer B."/>
            <person name="Kramer W."/>
            <person name="Lauquin G."/>
            <person name="Leuther H."/>
            <person name="Louis E.J."/>
            <person name="Maillier E."/>
            <person name="Marconi A."/>
            <person name="Martegani E."/>
            <person name="Mazon M.J."/>
            <person name="Mazzoni C."/>
            <person name="McReynolds A.D.K."/>
            <person name="Melchioretto P."/>
            <person name="Mewes H.-W."/>
            <person name="Minenkova O."/>
            <person name="Mueller-Auer S."/>
            <person name="Nawrocki A."/>
            <person name="Netter P."/>
            <person name="Neu R."/>
            <person name="Nombela C."/>
            <person name="Oliver S.G."/>
            <person name="Panzeri L."/>
            <person name="Paoluzi S."/>
            <person name="Plevani P."/>
            <person name="Portetelle D."/>
            <person name="Portillo F."/>
            <person name="Potier S."/>
            <person name="Purnelle B."/>
            <person name="Rieger M."/>
            <person name="Riles L."/>
            <person name="Rinaldi T."/>
            <person name="Robben J."/>
            <person name="Rodrigues-Pousada C."/>
            <person name="Rodriguez-Belmonte E."/>
            <person name="Rodriguez-Torres A.M."/>
            <person name="Rose M."/>
            <person name="Ruzzi M."/>
            <person name="Saliola M."/>
            <person name="Sanchez-Perez M."/>
            <person name="Schaefer B."/>
            <person name="Schaefer M."/>
            <person name="Scharfe M."/>
            <person name="Schmidheini T."/>
            <person name="Schreer A."/>
            <person name="Skala J."/>
            <person name="Souciet J.-L."/>
            <person name="Steensma H.Y."/>
            <person name="Talla E."/>
            <person name="Thierry A."/>
            <person name="Vandenbol M."/>
            <person name="van der Aart Q.J.M."/>
            <person name="Van Dyck L."/>
            <person name="Vanoni M."/>
            <person name="Verhasselt P."/>
            <person name="Voet M."/>
            <person name="Volckaert G."/>
            <person name="Wambutt R."/>
            <person name="Watson M.D."/>
            <person name="Weber N."/>
            <person name="Wedler E."/>
            <person name="Wedler H."/>
            <person name="Wipfli P."/>
            <person name="Wolf K."/>
            <person name="Wright L.F."/>
            <person name="Zaccaria P."/>
            <person name="Zimmermann M."/>
            <person name="Zollner A."/>
            <person name="Kleine K."/>
        </authorList>
    </citation>
    <scope>NUCLEOTIDE SEQUENCE [LARGE SCALE GENOMIC DNA]</scope>
    <source>
        <strain>ATCC 204508 / S288c</strain>
    </source>
</reference>
<reference key="4">
    <citation type="journal article" date="2014" name="G3 (Bethesda)">
        <title>The reference genome sequence of Saccharomyces cerevisiae: Then and now.</title>
        <authorList>
            <person name="Engel S.R."/>
            <person name="Dietrich F.S."/>
            <person name="Fisk D.G."/>
            <person name="Binkley G."/>
            <person name="Balakrishnan R."/>
            <person name="Costanzo M.C."/>
            <person name="Dwight S.S."/>
            <person name="Hitz B.C."/>
            <person name="Karra K."/>
            <person name="Nash R.S."/>
            <person name="Weng S."/>
            <person name="Wong E.D."/>
            <person name="Lloyd P."/>
            <person name="Skrzypek M.S."/>
            <person name="Miyasato S.R."/>
            <person name="Simison M."/>
            <person name="Cherry J.M."/>
        </authorList>
    </citation>
    <scope>GENOME REANNOTATION</scope>
    <source>
        <strain>ATCC 204508 / S288c</strain>
    </source>
</reference>
<reference key="5">
    <citation type="journal article" date="2007" name="Genome Res.">
        <title>Approaching a complete repository of sequence-verified protein-encoding clones for Saccharomyces cerevisiae.</title>
        <authorList>
            <person name="Hu Y."/>
            <person name="Rolfs A."/>
            <person name="Bhullar B."/>
            <person name="Murthy T.V.S."/>
            <person name="Zhu C."/>
            <person name="Berger M.F."/>
            <person name="Camargo A.A."/>
            <person name="Kelley F."/>
            <person name="McCarron S."/>
            <person name="Jepson D."/>
            <person name="Richardson A."/>
            <person name="Raphael J."/>
            <person name="Moreira D."/>
            <person name="Taycher E."/>
            <person name="Zuo D."/>
            <person name="Mohr S."/>
            <person name="Kane M.F."/>
            <person name="Williamson J."/>
            <person name="Simpson A.J.G."/>
            <person name="Bulyk M.L."/>
            <person name="Harlow E."/>
            <person name="Marsischky G."/>
            <person name="Kolodner R.D."/>
            <person name="LaBaer J."/>
        </authorList>
    </citation>
    <scope>NUCLEOTIDE SEQUENCE [GENOMIC DNA]</scope>
    <source>
        <strain>ATCC 204508 / S288c</strain>
    </source>
</reference>
<reference key="6">
    <citation type="journal article" date="1999" name="Glycobiology">
        <title>The Saccharomyces cerevisiae CWH8 gene is required for full levels of dolichol-linked oligosaccharides in the endoplasmic reticulum and for efficient N-glycosylation.</title>
        <authorList>
            <person name="van Berkel M.A.A."/>
            <person name="Rieger M."/>
            <person name="te Heesen S."/>
            <person name="Ram A.F.J."/>
            <person name="van den Ende H."/>
            <person name="Aebi M."/>
            <person name="Klis F.M."/>
        </authorList>
    </citation>
    <scope>FUNCTION</scope>
</reference>
<reference key="7">
    <citation type="journal article" date="2001" name="J. Biol. Chem.">
        <title>The CWH8 gene encodes a dolichyl pyrophosphate phosphatase with a luminally oriented active site in the endoplasmic reticulum of Saccharomyces cerevisiae.</title>
        <authorList>
            <person name="Fernandez F."/>
            <person name="Rush J.S."/>
            <person name="Toke D.A."/>
            <person name="Han G.-S."/>
            <person name="Quinn J.E."/>
            <person name="Carman G.M."/>
            <person name="Choi J.-Y."/>
            <person name="Voelker D.R."/>
            <person name="Aebi M."/>
            <person name="Waechter C.J."/>
        </authorList>
    </citation>
    <scope>FUNCTION</scope>
    <scope>DISRUPTION PHENOTYPE</scope>
    <scope>CATALYTIC ACTIVITY</scope>
    <scope>BIOPHYSICOCHEMICAL PROPERTIES</scope>
    <scope>SUBCELLULAR LOCATION</scope>
</reference>
<reference key="8">
    <citation type="journal article" date="2006" name="Proc. Natl. Acad. Sci. U.S.A.">
        <title>A global topology map of the Saccharomyces cerevisiae membrane proteome.</title>
        <authorList>
            <person name="Kim H."/>
            <person name="Melen K."/>
            <person name="Oesterberg M."/>
            <person name="von Heijne G."/>
        </authorList>
    </citation>
    <scope>TOPOLOGY [LARGE SCALE ANALYSIS]</scope>
    <source>
        <strain>ATCC 208353 / W303-1A</strain>
    </source>
</reference>
<dbReference type="EC" id="3.6.1.43" evidence="3"/>
<dbReference type="EMBL" id="DQ115390">
    <property type="protein sequence ID" value="AAZ22452.1"/>
    <property type="molecule type" value="Genomic_DNA"/>
</dbReference>
<dbReference type="EMBL" id="Z72821">
    <property type="protein sequence ID" value="CAA97024.1"/>
    <property type="molecule type" value="Genomic_DNA"/>
</dbReference>
<dbReference type="EMBL" id="AY557771">
    <property type="protein sequence ID" value="AAS56097.1"/>
    <property type="molecule type" value="Genomic_DNA"/>
</dbReference>
<dbReference type="EMBL" id="BK006941">
    <property type="protein sequence ID" value="DAA08134.1"/>
    <property type="molecule type" value="Genomic_DNA"/>
</dbReference>
<dbReference type="PIR" id="S64327">
    <property type="entry name" value="S64327"/>
</dbReference>
<dbReference type="RefSeq" id="NP_011550.3">
    <property type="nucleotide sequence ID" value="NM_001181165.3"/>
</dbReference>
<dbReference type="SMR" id="P53223"/>
<dbReference type="BioGRID" id="33281">
    <property type="interactions" value="70"/>
</dbReference>
<dbReference type="DIP" id="DIP-5237N"/>
<dbReference type="FunCoup" id="P53223">
    <property type="interactions" value="434"/>
</dbReference>
<dbReference type="IntAct" id="P53223">
    <property type="interactions" value="2"/>
</dbReference>
<dbReference type="MINT" id="P53223"/>
<dbReference type="STRING" id="4932.YGR036C"/>
<dbReference type="PaxDb" id="4932-YGR036C"/>
<dbReference type="PeptideAtlas" id="P53223"/>
<dbReference type="EnsemblFungi" id="YGR036C_mRNA">
    <property type="protein sequence ID" value="YGR036C"/>
    <property type="gene ID" value="YGR036C"/>
</dbReference>
<dbReference type="GeneID" id="852924"/>
<dbReference type="KEGG" id="sce:YGR036C"/>
<dbReference type="AGR" id="SGD:S000003268"/>
<dbReference type="SGD" id="S000003268">
    <property type="gene designation" value="CAX4"/>
</dbReference>
<dbReference type="VEuPathDB" id="FungiDB:YGR036C"/>
<dbReference type="eggNOG" id="KOG3146">
    <property type="taxonomic scope" value="Eukaryota"/>
</dbReference>
<dbReference type="GeneTree" id="ENSGT00390000013112"/>
<dbReference type="HOGENOM" id="CLU_074922_0_1_1"/>
<dbReference type="InParanoid" id="P53223"/>
<dbReference type="OMA" id="LTVYQHE"/>
<dbReference type="OrthoDB" id="302705at2759"/>
<dbReference type="BioCyc" id="YEAST:YGR036C-MONOMER"/>
<dbReference type="Reactome" id="R-SCE-191273">
    <property type="pathway name" value="Cholesterol biosynthesis"/>
</dbReference>
<dbReference type="UniPathway" id="UPA00378"/>
<dbReference type="BioGRID-ORCS" id="852924">
    <property type="hits" value="2 hits in 10 CRISPR screens"/>
</dbReference>
<dbReference type="PRO" id="PR:P53223"/>
<dbReference type="Proteomes" id="UP000002311">
    <property type="component" value="Chromosome VII"/>
</dbReference>
<dbReference type="RNAct" id="P53223">
    <property type="molecule type" value="protein"/>
</dbReference>
<dbReference type="GO" id="GO:0005783">
    <property type="term" value="C:endoplasmic reticulum"/>
    <property type="evidence" value="ECO:0007005"/>
    <property type="project" value="SGD"/>
</dbReference>
<dbReference type="GO" id="GO:0005789">
    <property type="term" value="C:endoplasmic reticulum membrane"/>
    <property type="evidence" value="ECO:0000314"/>
    <property type="project" value="SGD"/>
</dbReference>
<dbReference type="GO" id="GO:0047874">
    <property type="term" value="F:dolichyldiphosphatase activity"/>
    <property type="evidence" value="ECO:0000314"/>
    <property type="project" value="SGD"/>
</dbReference>
<dbReference type="GO" id="GO:0042392">
    <property type="term" value="F:sphingosine-1-phosphate phosphatase activity"/>
    <property type="evidence" value="ECO:0000318"/>
    <property type="project" value="GO_Central"/>
</dbReference>
<dbReference type="GO" id="GO:0008610">
    <property type="term" value="P:lipid biosynthetic process"/>
    <property type="evidence" value="ECO:0000315"/>
    <property type="project" value="SGD"/>
</dbReference>
<dbReference type="GO" id="GO:0006487">
    <property type="term" value="P:protein N-linked glycosylation"/>
    <property type="evidence" value="ECO:0000315"/>
    <property type="project" value="SGD"/>
</dbReference>
<dbReference type="CDD" id="cd03382">
    <property type="entry name" value="PAP2_dolichyldiphosphatase"/>
    <property type="match status" value="1"/>
</dbReference>
<dbReference type="FunFam" id="1.20.144.10:FF:000033">
    <property type="entry name" value="Dolichylpyrophosphate phosphatase"/>
    <property type="match status" value="1"/>
</dbReference>
<dbReference type="Gene3D" id="1.20.144.10">
    <property type="entry name" value="Phosphatidic acid phosphatase type 2/haloperoxidase"/>
    <property type="match status" value="1"/>
</dbReference>
<dbReference type="InterPro" id="IPR039667">
    <property type="entry name" value="Dolichyldiphosphatase_PAP2"/>
</dbReference>
<dbReference type="InterPro" id="IPR036938">
    <property type="entry name" value="P_Acid_Pase_2/haloperoxi_sf"/>
</dbReference>
<dbReference type="InterPro" id="IPR000326">
    <property type="entry name" value="P_Acid_Pase_2/haloperoxidase"/>
</dbReference>
<dbReference type="PANTHER" id="PTHR14969:SF59">
    <property type="entry name" value="DOLICHYLDIPHOSPHATASE"/>
    <property type="match status" value="1"/>
</dbReference>
<dbReference type="PANTHER" id="PTHR14969">
    <property type="entry name" value="SPHINGOSINE-1-PHOSPHATE PHOSPHOHYDROLASE"/>
    <property type="match status" value="1"/>
</dbReference>
<dbReference type="Pfam" id="PF01569">
    <property type="entry name" value="PAP2"/>
    <property type="match status" value="1"/>
</dbReference>
<dbReference type="SMART" id="SM00014">
    <property type="entry name" value="acidPPc"/>
    <property type="match status" value="1"/>
</dbReference>
<dbReference type="SUPFAM" id="SSF48317">
    <property type="entry name" value="Acid phosphatase/Vanadium-dependent haloperoxidase"/>
    <property type="match status" value="1"/>
</dbReference>
<organism>
    <name type="scientific">Saccharomyces cerevisiae (strain ATCC 204508 / S288c)</name>
    <name type="common">Baker's yeast</name>
    <dbReference type="NCBI Taxonomy" id="559292"/>
    <lineage>
        <taxon>Eukaryota</taxon>
        <taxon>Fungi</taxon>
        <taxon>Dikarya</taxon>
        <taxon>Ascomycota</taxon>
        <taxon>Saccharomycotina</taxon>
        <taxon>Saccharomycetes</taxon>
        <taxon>Saccharomycetales</taxon>
        <taxon>Saccharomycetaceae</taxon>
        <taxon>Saccharomyces</taxon>
    </lineage>
</organism>
<keyword id="KW-0256">Endoplasmic reticulum</keyword>
<keyword id="KW-0378">Hydrolase</keyword>
<keyword id="KW-0472">Membrane</keyword>
<keyword id="KW-1185">Reference proteome</keyword>
<keyword id="KW-0812">Transmembrane</keyword>
<keyword id="KW-1133">Transmembrane helix</keyword>
<gene>
    <name type="primary">CAX4</name>
    <name evidence="4" type="synonym">CWH8</name>
    <name type="ordered locus">YGR036C</name>
</gene>
<proteinExistence type="evidence at protein level"/>
<evidence type="ECO:0000255" key="1"/>
<evidence type="ECO:0000269" key="2">
    <source>
    </source>
</evidence>
<evidence type="ECO:0000269" key="3">
    <source>
    </source>
</evidence>
<evidence type="ECO:0000303" key="4">
    <source>
    </source>
</evidence>
<evidence type="ECO:0000305" key="5"/>
<sequence>MNSTAAAINPNPNVIPFDDTYILYDSHDFLSFLSAYFSLMPILVLAFYLSWFIITRELEACIVAFGQLMNEIFNNVIKNIIKQPRPVSFGASFQNDTIRSGYGMPSAHSQFMGFCFTYNSLKIYTSWKNLNFLEKCIFSGALALLSFCVCFSRVYLHYHNLDQVIVGFSVGALTGSLYFFIVGIIRELGLINWFLKLRIVRLFYMTDSYNLAPLTLKENYEAYWKRINQRSFNDKSKRD</sequence>
<accession>P53223</accession>
<accession>D6VUH3</accession>
<accession>Q45U47</accession>
<protein>
    <recommendedName>
        <fullName evidence="4">Dolichyldiphosphatase</fullName>
        <ecNumber evidence="3">3.6.1.43</ecNumber>
    </recommendedName>
    <alternativeName>
        <fullName evidence="4">Dolichyl pyrophosphate phosphatase</fullName>
    </alternativeName>
</protein>